<name>RPOC_MESFL</name>
<evidence type="ECO:0000255" key="1">
    <source>
        <dbReference type="HAMAP-Rule" id="MF_01322"/>
    </source>
</evidence>
<protein>
    <recommendedName>
        <fullName evidence="1">DNA-directed RNA polymerase subunit beta'</fullName>
        <shortName evidence="1">RNAP subunit beta'</shortName>
        <ecNumber evidence="1">2.7.7.6</ecNumber>
    </recommendedName>
    <alternativeName>
        <fullName evidence="1">RNA polymerase subunit beta'</fullName>
    </alternativeName>
    <alternativeName>
        <fullName evidence="1">Transcriptase subunit beta'</fullName>
    </alternativeName>
</protein>
<comment type="function">
    <text evidence="1">DNA-dependent RNA polymerase catalyzes the transcription of DNA into RNA using the four ribonucleoside triphosphates as substrates.</text>
</comment>
<comment type="catalytic activity">
    <reaction evidence="1">
        <text>RNA(n) + a ribonucleoside 5'-triphosphate = RNA(n+1) + diphosphate</text>
        <dbReference type="Rhea" id="RHEA:21248"/>
        <dbReference type="Rhea" id="RHEA-COMP:14527"/>
        <dbReference type="Rhea" id="RHEA-COMP:17342"/>
        <dbReference type="ChEBI" id="CHEBI:33019"/>
        <dbReference type="ChEBI" id="CHEBI:61557"/>
        <dbReference type="ChEBI" id="CHEBI:140395"/>
        <dbReference type="EC" id="2.7.7.6"/>
    </reaction>
</comment>
<comment type="cofactor">
    <cofactor evidence="1">
        <name>Mg(2+)</name>
        <dbReference type="ChEBI" id="CHEBI:18420"/>
    </cofactor>
    <text evidence="1">Binds 1 Mg(2+) ion per subunit.</text>
</comment>
<comment type="cofactor">
    <cofactor evidence="1">
        <name>Zn(2+)</name>
        <dbReference type="ChEBI" id="CHEBI:29105"/>
    </cofactor>
    <text evidence="1">Binds 2 Zn(2+) ions per subunit.</text>
</comment>
<comment type="subunit">
    <text evidence="1">The RNAP catalytic core consists of 2 alpha, 1 beta, 1 beta' and 1 omega subunit. When a sigma factor is associated with the core the holoenzyme is formed, which can initiate transcription.</text>
</comment>
<comment type="similarity">
    <text evidence="1">Belongs to the RNA polymerase beta' chain family.</text>
</comment>
<feature type="chain" id="PRO_0000225550" description="DNA-directed RNA polymerase subunit beta'">
    <location>
        <begin position="1"/>
        <end position="1254"/>
    </location>
</feature>
<feature type="binding site" evidence="1">
    <location>
        <position position="59"/>
    </location>
    <ligand>
        <name>Zn(2+)</name>
        <dbReference type="ChEBI" id="CHEBI:29105"/>
        <label>1</label>
    </ligand>
</feature>
<feature type="binding site" evidence="1">
    <location>
        <position position="61"/>
    </location>
    <ligand>
        <name>Zn(2+)</name>
        <dbReference type="ChEBI" id="CHEBI:29105"/>
        <label>1</label>
    </ligand>
</feature>
<feature type="binding site" evidence="1">
    <location>
        <position position="76"/>
    </location>
    <ligand>
        <name>Zn(2+)</name>
        <dbReference type="ChEBI" id="CHEBI:29105"/>
        <label>1</label>
    </ligand>
</feature>
<feature type="binding site" evidence="1">
    <location>
        <position position="79"/>
    </location>
    <ligand>
        <name>Zn(2+)</name>
        <dbReference type="ChEBI" id="CHEBI:29105"/>
        <label>1</label>
    </ligand>
</feature>
<feature type="binding site" evidence="1">
    <location>
        <position position="501"/>
    </location>
    <ligand>
        <name>Mg(2+)</name>
        <dbReference type="ChEBI" id="CHEBI:18420"/>
    </ligand>
</feature>
<feature type="binding site" evidence="1">
    <location>
        <position position="503"/>
    </location>
    <ligand>
        <name>Mg(2+)</name>
        <dbReference type="ChEBI" id="CHEBI:18420"/>
    </ligand>
</feature>
<feature type="binding site" evidence="1">
    <location>
        <position position="505"/>
    </location>
    <ligand>
        <name>Mg(2+)</name>
        <dbReference type="ChEBI" id="CHEBI:18420"/>
    </ligand>
</feature>
<feature type="binding site" evidence="1">
    <location>
        <position position="871"/>
    </location>
    <ligand>
        <name>Zn(2+)</name>
        <dbReference type="ChEBI" id="CHEBI:29105"/>
        <label>2</label>
    </ligand>
</feature>
<feature type="binding site" evidence="1">
    <location>
        <position position="946"/>
    </location>
    <ligand>
        <name>Zn(2+)</name>
        <dbReference type="ChEBI" id="CHEBI:29105"/>
        <label>2</label>
    </ligand>
</feature>
<feature type="binding site" evidence="1">
    <location>
        <position position="953"/>
    </location>
    <ligand>
        <name>Zn(2+)</name>
        <dbReference type="ChEBI" id="CHEBI:29105"/>
        <label>2</label>
    </ligand>
</feature>
<feature type="binding site" evidence="1">
    <location>
        <position position="956"/>
    </location>
    <ligand>
        <name>Zn(2+)</name>
        <dbReference type="ChEBI" id="CHEBI:29105"/>
        <label>2</label>
    </ligand>
</feature>
<reference key="1">
    <citation type="submission" date="2004-06" db="EMBL/GenBank/DDBJ databases">
        <authorList>
            <person name="Birren B.W."/>
            <person name="Stange-Thomann N."/>
            <person name="Hafez N."/>
            <person name="DeCaprio D."/>
            <person name="Fisher S."/>
            <person name="Butler J."/>
            <person name="Elkins T."/>
            <person name="Kodira C.D."/>
            <person name="Major J."/>
            <person name="Wang S."/>
            <person name="Nicol R."/>
            <person name="Nusbaum C."/>
        </authorList>
    </citation>
    <scope>NUCLEOTIDE SEQUENCE [LARGE SCALE GENOMIC DNA]</scope>
    <source>
        <strain>ATCC 33453 / NBRC 100688 / NCTC 11704 / L1</strain>
    </source>
</reference>
<sequence length="1254" mass="139622">MENKNNKVIKIELASADTIRSWSHGEVTKPETINYKTLKAEKDGLFDEKIFGPTKNYECFCGKFKKANPMNKGKKCEKCGVELTESIVRRERMGHIELAEPVTHIWMVKVSPSRIASLLDLKSKELEEVVYFVSHIVLDPGTSKHFAAKEVLDLGVSKSQKTRSKLRPAIEEIVTLINDPAHRDTLKAERLLEELNNPTIPFSIDEATALISKYTDAKFGIGASAIEELLKQIDLDKEIEITKNTLDAIGPNADNSKLLKRLDILESLKRSNQKPEWMVLRVLPVIPPDIRPIIQLDGGRFTTSEINDLYRRIIIRNERLLKVKEMGAPSIIINNEKRMLQEAVDALLDNERKPRPIQGKDKRPLKSLTSVLKGKQGRFRQNLLGKRVDYSGRSVIAIGPDLKMYQAGIPREMALTLFKPFVIQWLQEHEYAENVKVAEKMILQNDPKIWEALEHVIKDRPVLLNRAPTLHRLGIQAFEPKLVKGKAIRLHPLVTTAFNADFDGDQMAVHVPITKEAVAEARALMLGSNAILGPKDGKAIVTPGQDIILGNYYATFEEKGQLGEGTMFAEITEAINAFDTGIVSLNAVIGIAVDALPAEKFTEEQRKGYLLTTVGKILFNQIFDASFPWINSSSIYDAKEAVNSFIFDFSKDINEAIAEYTIVTPIKKKELSIIIEIYFNKFGARKTAEMLDKMKDLGFKYSTKSGTTISAGDVVAFKHKYEEFAEADQKVAEITSFYNEGMLTKEEKKHRVIEVWSDVKDDIQKRLELVLKQDTKNPVFVMADSGARGNVSNFTQLVGMRGLMNDTKGDIKEIPIKSSFREGLSVSEYFVSTHGARKGMADLALKTADSGYLTRRLVDVSQEIVVVNEDCKANKGFEIESVIDTKHNNVIVPLKDRIVGRYSFNDIKDIKGNVIVAKDTLIESKEADAIIAAGITKVTIRSVLTCDNQKGVCQRCYGRNLATASLVKIGEPVGVIAAQSIGEPGTQLTMRTFHTGGVAGDADITQGLPRIKELLDVTTQKGSVAIIAEKAGVVSDIINKNGINTIVVTEEVNGTQIEKQYKTMYNAVLRVNKGDQVKPGKKLTEGSINLHDLLEVAGTTAVQNYILKEVQKVYRLQGIEISDKYIEIIVKQMLNKVKVIQSGESHLLQGEIVTQQKFKEVVTQCIREGLVPPVAKNQILGIKKAPLKSESWLSSASFQDTARVLTDAIIKGREDKLEGLKENIMLGNLIPAGTGLTGIEEVMEIAEEYHKNEY</sequence>
<dbReference type="EC" id="2.7.7.6" evidence="1"/>
<dbReference type="EMBL" id="AE017263">
    <property type="protein sequence ID" value="AAT75955.1"/>
    <property type="molecule type" value="Genomic_DNA"/>
</dbReference>
<dbReference type="RefSeq" id="WP_011183495.1">
    <property type="nucleotide sequence ID" value="NC_006055.1"/>
</dbReference>
<dbReference type="RefSeq" id="YP_053839.1">
    <property type="nucleotide sequence ID" value="NC_006055.1"/>
</dbReference>
<dbReference type="SMR" id="Q6F0L8"/>
<dbReference type="STRING" id="265311.Mfl597"/>
<dbReference type="PaxDb" id="265311-Mfl597"/>
<dbReference type="EnsemblBacteria" id="AAT75955">
    <property type="protein sequence ID" value="AAT75955"/>
    <property type="gene ID" value="Mfl597"/>
</dbReference>
<dbReference type="GeneID" id="2897589"/>
<dbReference type="KEGG" id="mfl:Mfl597"/>
<dbReference type="PATRIC" id="fig|265311.5.peg.601"/>
<dbReference type="eggNOG" id="COG0086">
    <property type="taxonomic scope" value="Bacteria"/>
</dbReference>
<dbReference type="HOGENOM" id="CLU_000524_3_1_14"/>
<dbReference type="OrthoDB" id="9815296at2"/>
<dbReference type="Proteomes" id="UP000006647">
    <property type="component" value="Chromosome"/>
</dbReference>
<dbReference type="GO" id="GO:0000428">
    <property type="term" value="C:DNA-directed RNA polymerase complex"/>
    <property type="evidence" value="ECO:0007669"/>
    <property type="project" value="UniProtKB-KW"/>
</dbReference>
<dbReference type="GO" id="GO:0003677">
    <property type="term" value="F:DNA binding"/>
    <property type="evidence" value="ECO:0007669"/>
    <property type="project" value="UniProtKB-UniRule"/>
</dbReference>
<dbReference type="GO" id="GO:0003899">
    <property type="term" value="F:DNA-directed RNA polymerase activity"/>
    <property type="evidence" value="ECO:0007669"/>
    <property type="project" value="UniProtKB-UniRule"/>
</dbReference>
<dbReference type="GO" id="GO:0000287">
    <property type="term" value="F:magnesium ion binding"/>
    <property type="evidence" value="ECO:0007669"/>
    <property type="project" value="UniProtKB-UniRule"/>
</dbReference>
<dbReference type="GO" id="GO:0008270">
    <property type="term" value="F:zinc ion binding"/>
    <property type="evidence" value="ECO:0007669"/>
    <property type="project" value="UniProtKB-UniRule"/>
</dbReference>
<dbReference type="GO" id="GO:0006351">
    <property type="term" value="P:DNA-templated transcription"/>
    <property type="evidence" value="ECO:0007669"/>
    <property type="project" value="UniProtKB-UniRule"/>
</dbReference>
<dbReference type="CDD" id="cd02655">
    <property type="entry name" value="RNAP_beta'_C"/>
    <property type="match status" value="1"/>
</dbReference>
<dbReference type="CDD" id="cd01609">
    <property type="entry name" value="RNAP_beta'_N"/>
    <property type="match status" value="1"/>
</dbReference>
<dbReference type="Gene3D" id="1.10.132.30">
    <property type="match status" value="1"/>
</dbReference>
<dbReference type="Gene3D" id="1.10.150.390">
    <property type="match status" value="1"/>
</dbReference>
<dbReference type="Gene3D" id="1.10.1790.20">
    <property type="match status" value="1"/>
</dbReference>
<dbReference type="Gene3D" id="1.10.40.90">
    <property type="match status" value="1"/>
</dbReference>
<dbReference type="Gene3D" id="2.40.40.20">
    <property type="match status" value="1"/>
</dbReference>
<dbReference type="Gene3D" id="2.40.50.100">
    <property type="match status" value="1"/>
</dbReference>
<dbReference type="Gene3D" id="4.10.860.120">
    <property type="entry name" value="RNA polymerase II, clamp domain"/>
    <property type="match status" value="1"/>
</dbReference>
<dbReference type="Gene3D" id="1.10.274.100">
    <property type="entry name" value="RNA polymerase Rpb1, domain 3"/>
    <property type="match status" value="1"/>
</dbReference>
<dbReference type="HAMAP" id="MF_01322">
    <property type="entry name" value="RNApol_bact_RpoC"/>
    <property type="match status" value="1"/>
</dbReference>
<dbReference type="InterPro" id="IPR045867">
    <property type="entry name" value="DNA-dir_RpoC_beta_prime"/>
</dbReference>
<dbReference type="InterPro" id="IPR012754">
    <property type="entry name" value="DNA-dir_RpoC_beta_prime_bact"/>
</dbReference>
<dbReference type="InterPro" id="IPR000722">
    <property type="entry name" value="RNA_pol_asu"/>
</dbReference>
<dbReference type="InterPro" id="IPR006592">
    <property type="entry name" value="RNA_pol_N"/>
</dbReference>
<dbReference type="InterPro" id="IPR007080">
    <property type="entry name" value="RNA_pol_Rpb1_1"/>
</dbReference>
<dbReference type="InterPro" id="IPR007066">
    <property type="entry name" value="RNA_pol_Rpb1_3"/>
</dbReference>
<dbReference type="InterPro" id="IPR042102">
    <property type="entry name" value="RNA_pol_Rpb1_3_sf"/>
</dbReference>
<dbReference type="InterPro" id="IPR007083">
    <property type="entry name" value="RNA_pol_Rpb1_4"/>
</dbReference>
<dbReference type="InterPro" id="IPR007081">
    <property type="entry name" value="RNA_pol_Rpb1_5"/>
</dbReference>
<dbReference type="InterPro" id="IPR044893">
    <property type="entry name" value="RNA_pol_Rpb1_clamp_domain"/>
</dbReference>
<dbReference type="InterPro" id="IPR038120">
    <property type="entry name" value="Rpb1_funnel_sf"/>
</dbReference>
<dbReference type="NCBIfam" id="TIGR02386">
    <property type="entry name" value="rpoC_TIGR"/>
    <property type="match status" value="1"/>
</dbReference>
<dbReference type="PANTHER" id="PTHR19376">
    <property type="entry name" value="DNA-DIRECTED RNA POLYMERASE"/>
    <property type="match status" value="1"/>
</dbReference>
<dbReference type="PANTHER" id="PTHR19376:SF54">
    <property type="entry name" value="DNA-DIRECTED RNA POLYMERASE SUBUNIT BETA"/>
    <property type="match status" value="1"/>
</dbReference>
<dbReference type="Pfam" id="PF04997">
    <property type="entry name" value="RNA_pol_Rpb1_1"/>
    <property type="match status" value="1"/>
</dbReference>
<dbReference type="Pfam" id="PF00623">
    <property type="entry name" value="RNA_pol_Rpb1_2"/>
    <property type="match status" value="1"/>
</dbReference>
<dbReference type="Pfam" id="PF04983">
    <property type="entry name" value="RNA_pol_Rpb1_3"/>
    <property type="match status" value="1"/>
</dbReference>
<dbReference type="Pfam" id="PF05000">
    <property type="entry name" value="RNA_pol_Rpb1_4"/>
    <property type="match status" value="1"/>
</dbReference>
<dbReference type="Pfam" id="PF04998">
    <property type="entry name" value="RNA_pol_Rpb1_5"/>
    <property type="match status" value="1"/>
</dbReference>
<dbReference type="SMART" id="SM00663">
    <property type="entry name" value="RPOLA_N"/>
    <property type="match status" value="1"/>
</dbReference>
<dbReference type="SUPFAM" id="SSF64484">
    <property type="entry name" value="beta and beta-prime subunits of DNA dependent RNA-polymerase"/>
    <property type="match status" value="1"/>
</dbReference>
<organism>
    <name type="scientific">Mesoplasma florum (strain ATCC 33453 / NBRC 100688 / NCTC 11704 / L1)</name>
    <name type="common">Acholeplasma florum</name>
    <dbReference type="NCBI Taxonomy" id="265311"/>
    <lineage>
        <taxon>Bacteria</taxon>
        <taxon>Bacillati</taxon>
        <taxon>Mycoplasmatota</taxon>
        <taxon>Mollicutes</taxon>
        <taxon>Entomoplasmatales</taxon>
        <taxon>Entomoplasmataceae</taxon>
        <taxon>Mesoplasma</taxon>
    </lineage>
</organism>
<gene>
    <name evidence="1" type="primary">rpoC</name>
    <name type="ordered locus">Mfl597</name>
</gene>
<proteinExistence type="inferred from homology"/>
<accession>Q6F0L8</accession>
<keyword id="KW-0240">DNA-directed RNA polymerase</keyword>
<keyword id="KW-0460">Magnesium</keyword>
<keyword id="KW-0479">Metal-binding</keyword>
<keyword id="KW-0548">Nucleotidyltransferase</keyword>
<keyword id="KW-1185">Reference proteome</keyword>
<keyword id="KW-0804">Transcription</keyword>
<keyword id="KW-0808">Transferase</keyword>
<keyword id="KW-0862">Zinc</keyword>